<organism>
    <name type="scientific">Homo sapiens</name>
    <name type="common">Human</name>
    <dbReference type="NCBI Taxonomy" id="9606"/>
    <lineage>
        <taxon>Eukaryota</taxon>
        <taxon>Metazoa</taxon>
        <taxon>Chordata</taxon>
        <taxon>Craniata</taxon>
        <taxon>Vertebrata</taxon>
        <taxon>Euteleostomi</taxon>
        <taxon>Mammalia</taxon>
        <taxon>Eutheria</taxon>
        <taxon>Euarchontoglires</taxon>
        <taxon>Primates</taxon>
        <taxon>Haplorrhini</taxon>
        <taxon>Catarrhini</taxon>
        <taxon>Hominidae</taxon>
        <taxon>Homo</taxon>
    </lineage>
</organism>
<feature type="chain" id="PRO_0000395106" description="NHL-repeat-containing protein 4">
    <location>
        <begin position="1"/>
        <end position="123"/>
    </location>
</feature>
<feature type="repeat" description="NHL 1">
    <location>
        <begin position="35"/>
        <end position="78"/>
    </location>
</feature>
<feature type="repeat" description="NHL 2">
    <location>
        <begin position="79"/>
        <end position="119"/>
    </location>
</feature>
<name>NHLC4_HUMAN</name>
<protein>
    <recommendedName>
        <fullName>NHL-repeat-containing protein 4</fullName>
    </recommendedName>
</protein>
<gene>
    <name type="primary">NHLRC4</name>
</gene>
<comment type="interaction">
    <interactant intactId="EBI-12868744">
        <id>P0CG21</id>
    </interactant>
    <interactant intactId="EBI-10274247">
        <id>Q8TCT0</id>
        <label>CERK</label>
    </interactant>
    <organismsDiffer>false</organismsDiffer>
    <experiments>3</experiments>
</comment>
<comment type="interaction">
    <interactant intactId="EBI-12868744">
        <id>P0CG21</id>
    </interactant>
    <interactant intactId="EBI-742054">
        <id>Q96D03</id>
        <label>DDIT4L</label>
    </interactant>
    <organismsDiffer>false</organismsDiffer>
    <experiments>3</experiments>
</comment>
<comment type="interaction">
    <interactant intactId="EBI-12868744">
        <id>P0CG21</id>
    </interactant>
    <interactant intactId="EBI-9679045">
        <id>Q9NQL9</id>
        <label>DMRT3</label>
    </interactant>
    <organismsDiffer>false</organismsDiffer>
    <experiments>3</experiments>
</comment>
<comment type="interaction">
    <interactant intactId="EBI-12868744">
        <id>P0CG21</id>
    </interactant>
    <interactant intactId="EBI-740376">
        <id>Q86UW9</id>
        <label>DTX2</label>
    </interactant>
    <organismsDiffer>false</organismsDiffer>
    <experiments>3</experiments>
</comment>
<comment type="interaction">
    <interactant intactId="EBI-12868744">
        <id>P0CG21</id>
    </interactant>
    <interactant intactId="EBI-744099">
        <id>Q9H0I2</id>
        <label>ENKD1</label>
    </interactant>
    <organismsDiffer>false</organismsDiffer>
    <experiments>3</experiments>
</comment>
<comment type="interaction">
    <interactant intactId="EBI-12868744">
        <id>P0CG21</id>
    </interactant>
    <interactant intactId="EBI-12056251">
        <id>Q9ULV5-2</id>
        <label>HSF4</label>
    </interactant>
    <organismsDiffer>false</organismsDiffer>
    <experiments>3</experiments>
</comment>
<comment type="interaction">
    <interactant intactId="EBI-12868744">
        <id>P0CG21</id>
    </interactant>
    <interactant intactId="EBI-11955401">
        <id>Q86VF2-5</id>
        <label>IGFN1</label>
    </interactant>
    <organismsDiffer>false</organismsDiffer>
    <experiments>3</experiments>
</comment>
<comment type="interaction">
    <interactant intactId="EBI-12868744">
        <id>P0CG21</id>
    </interactant>
    <interactant intactId="EBI-11953846">
        <id>Q52LG2</id>
        <label>KRTAP13-2</label>
    </interactant>
    <organismsDiffer>false</organismsDiffer>
    <experiments>3</experiments>
</comment>
<comment type="interaction">
    <interactant intactId="EBI-12868744">
        <id>P0CG21</id>
    </interactant>
    <interactant intactId="EBI-11992140">
        <id>Q3LI76</id>
        <label>KRTAP15-1</label>
    </interactant>
    <organismsDiffer>false</organismsDiffer>
    <experiments>3</experiments>
</comment>
<comment type="interaction">
    <interactant intactId="EBI-12868744">
        <id>P0CG21</id>
    </interactant>
    <interactant intactId="EBI-3957672">
        <id>Q6PEX3</id>
        <label>KRTAP26-1</label>
    </interactant>
    <organismsDiffer>false</organismsDiffer>
    <experiments>3</experiments>
</comment>
<comment type="interaction">
    <interactant intactId="EBI-12868744">
        <id>P0CG21</id>
    </interactant>
    <interactant intactId="EBI-6952711">
        <id>Q8WY64</id>
        <label>MYLIP</label>
    </interactant>
    <organismsDiffer>false</organismsDiffer>
    <experiments>3</experiments>
</comment>
<comment type="interaction">
    <interactant intactId="EBI-12868744">
        <id>P0CG21</id>
    </interactant>
    <interactant intactId="EBI-740446">
        <id>P32242</id>
        <label>OTX1</label>
    </interactant>
    <organismsDiffer>false</organismsDiffer>
    <experiments>3</experiments>
</comment>
<comment type="interaction">
    <interactant intactId="EBI-12868744">
        <id>P0CG21</id>
    </interactant>
    <interactant intactId="EBI-11022007">
        <id>Q9HBE1-4</id>
        <label>PATZ1</label>
    </interactant>
    <organismsDiffer>false</organismsDiffer>
    <experiments>3</experiments>
</comment>
<comment type="interaction">
    <interactant intactId="EBI-12868744">
        <id>P0CG21</id>
    </interactant>
    <interactant intactId="EBI-748265">
        <id>P78337</id>
        <label>PITX1</label>
    </interactant>
    <organismsDiffer>false</organismsDiffer>
    <experiments>5</experiments>
</comment>
<comment type="interaction">
    <interactant intactId="EBI-12868744">
        <id>P0CG21</id>
    </interactant>
    <interactant intactId="EBI-1389308">
        <id>Q7Z3K3</id>
        <label>POGZ</label>
    </interactant>
    <organismsDiffer>false</organismsDiffer>
    <experiments>3</experiments>
</comment>
<comment type="interaction">
    <interactant intactId="EBI-12868744">
        <id>P0CG21</id>
    </interactant>
    <interactant intactId="EBI-12033574">
        <id>Q15319</id>
        <label>POU4F3</label>
    </interactant>
    <organismsDiffer>false</organismsDiffer>
    <experiments>3</experiments>
</comment>
<comment type="interaction">
    <interactant intactId="EBI-12868744">
        <id>P0CG21</id>
    </interactant>
    <interactant intactId="EBI-1053424">
        <id>O43741</id>
        <label>PRKAB2</label>
    </interactant>
    <organismsDiffer>false</organismsDiffer>
    <experiments>3</experiments>
</comment>
<comment type="interaction">
    <interactant intactId="EBI-12868744">
        <id>P0CG21</id>
    </interactant>
    <interactant intactId="EBI-11959123">
        <id>Q99932-2</id>
        <label>SPAG8</label>
    </interactant>
    <organismsDiffer>false</organismsDiffer>
    <experiments>3</experiments>
</comment>
<comment type="interaction">
    <interactant intactId="EBI-12868744">
        <id>P0CG21</id>
    </interactant>
    <interactant intactId="EBI-3939165">
        <id>O43711</id>
        <label>TLX3</label>
    </interactant>
    <organismsDiffer>false</organismsDiffer>
    <experiments>3</experiments>
</comment>
<sequence>MLGLEGPCWVGPGPDGGLAVSEEFGDVRLFGSARQPLGSLGGWTGHTFGCPAGICSNSEGNVIVADEQRRQVTLFPRAGPPICLVSEGLGQPLGVACAPQGQLLVADAKDNSIKVYQGLKELA</sequence>
<reference key="1">
    <citation type="journal article" date="2004" name="Nat. Genet.">
        <title>Complete sequencing and characterization of 21,243 full-length human cDNAs.</title>
        <authorList>
            <person name="Ota T."/>
            <person name="Suzuki Y."/>
            <person name="Nishikawa T."/>
            <person name="Otsuki T."/>
            <person name="Sugiyama T."/>
            <person name="Irie R."/>
            <person name="Wakamatsu A."/>
            <person name="Hayashi K."/>
            <person name="Sato H."/>
            <person name="Nagai K."/>
            <person name="Kimura K."/>
            <person name="Makita H."/>
            <person name="Sekine M."/>
            <person name="Obayashi M."/>
            <person name="Nishi T."/>
            <person name="Shibahara T."/>
            <person name="Tanaka T."/>
            <person name="Ishii S."/>
            <person name="Yamamoto J."/>
            <person name="Saito K."/>
            <person name="Kawai Y."/>
            <person name="Isono Y."/>
            <person name="Nakamura Y."/>
            <person name="Nagahari K."/>
            <person name="Murakami K."/>
            <person name="Yasuda T."/>
            <person name="Iwayanagi T."/>
            <person name="Wagatsuma M."/>
            <person name="Shiratori A."/>
            <person name="Sudo H."/>
            <person name="Hosoiri T."/>
            <person name="Kaku Y."/>
            <person name="Kodaira H."/>
            <person name="Kondo H."/>
            <person name="Sugawara M."/>
            <person name="Takahashi M."/>
            <person name="Kanda K."/>
            <person name="Yokoi T."/>
            <person name="Furuya T."/>
            <person name="Kikkawa E."/>
            <person name="Omura Y."/>
            <person name="Abe K."/>
            <person name="Kamihara K."/>
            <person name="Katsuta N."/>
            <person name="Sato K."/>
            <person name="Tanikawa M."/>
            <person name="Yamazaki M."/>
            <person name="Ninomiya K."/>
            <person name="Ishibashi T."/>
            <person name="Yamashita H."/>
            <person name="Murakawa K."/>
            <person name="Fujimori K."/>
            <person name="Tanai H."/>
            <person name="Kimata M."/>
            <person name="Watanabe M."/>
            <person name="Hiraoka S."/>
            <person name="Chiba Y."/>
            <person name="Ishida S."/>
            <person name="Ono Y."/>
            <person name="Takiguchi S."/>
            <person name="Watanabe S."/>
            <person name="Yosida M."/>
            <person name="Hotuta T."/>
            <person name="Kusano J."/>
            <person name="Kanehori K."/>
            <person name="Takahashi-Fujii A."/>
            <person name="Hara H."/>
            <person name="Tanase T.-O."/>
            <person name="Nomura Y."/>
            <person name="Togiya S."/>
            <person name="Komai F."/>
            <person name="Hara R."/>
            <person name="Takeuchi K."/>
            <person name="Arita M."/>
            <person name="Imose N."/>
            <person name="Musashino K."/>
            <person name="Yuuki H."/>
            <person name="Oshima A."/>
            <person name="Sasaki N."/>
            <person name="Aotsuka S."/>
            <person name="Yoshikawa Y."/>
            <person name="Matsunawa H."/>
            <person name="Ichihara T."/>
            <person name="Shiohata N."/>
            <person name="Sano S."/>
            <person name="Moriya S."/>
            <person name="Momiyama H."/>
            <person name="Satoh N."/>
            <person name="Takami S."/>
            <person name="Terashima Y."/>
            <person name="Suzuki O."/>
            <person name="Nakagawa S."/>
            <person name="Senoh A."/>
            <person name="Mizoguchi H."/>
            <person name="Goto Y."/>
            <person name="Shimizu F."/>
            <person name="Wakebe H."/>
            <person name="Hishigaki H."/>
            <person name="Watanabe T."/>
            <person name="Sugiyama A."/>
            <person name="Takemoto M."/>
            <person name="Kawakami B."/>
            <person name="Yamazaki M."/>
            <person name="Watanabe K."/>
            <person name="Kumagai A."/>
            <person name="Itakura S."/>
            <person name="Fukuzumi Y."/>
            <person name="Fujimori Y."/>
            <person name="Komiyama M."/>
            <person name="Tashiro H."/>
            <person name="Tanigami A."/>
            <person name="Fujiwara T."/>
            <person name="Ono T."/>
            <person name="Yamada K."/>
            <person name="Fujii Y."/>
            <person name="Ozaki K."/>
            <person name="Hirao M."/>
            <person name="Ohmori Y."/>
            <person name="Kawabata A."/>
            <person name="Hikiji T."/>
            <person name="Kobatake N."/>
            <person name="Inagaki H."/>
            <person name="Ikema Y."/>
            <person name="Okamoto S."/>
            <person name="Okitani R."/>
            <person name="Kawakami T."/>
            <person name="Noguchi S."/>
            <person name="Itoh T."/>
            <person name="Shigeta K."/>
            <person name="Senba T."/>
            <person name="Matsumura K."/>
            <person name="Nakajima Y."/>
            <person name="Mizuno T."/>
            <person name="Morinaga M."/>
            <person name="Sasaki M."/>
            <person name="Togashi T."/>
            <person name="Oyama M."/>
            <person name="Hata H."/>
            <person name="Watanabe M."/>
            <person name="Komatsu T."/>
            <person name="Mizushima-Sugano J."/>
            <person name="Satoh T."/>
            <person name="Shirai Y."/>
            <person name="Takahashi Y."/>
            <person name="Nakagawa K."/>
            <person name="Okumura K."/>
            <person name="Nagase T."/>
            <person name="Nomura N."/>
            <person name="Kikuchi H."/>
            <person name="Masuho Y."/>
            <person name="Yamashita R."/>
            <person name="Nakai K."/>
            <person name="Yada T."/>
            <person name="Nakamura Y."/>
            <person name="Ohara O."/>
            <person name="Isogai T."/>
            <person name="Sugano S."/>
        </authorList>
    </citation>
    <scope>NUCLEOTIDE SEQUENCE [LARGE SCALE MRNA]</scope>
    <source>
        <tissue>Thymus</tissue>
    </source>
</reference>
<reference key="2">
    <citation type="journal article" date="2004" name="Nature">
        <title>The sequence and analysis of duplication-rich human chromosome 16.</title>
        <authorList>
            <person name="Martin J."/>
            <person name="Han C."/>
            <person name="Gordon L.A."/>
            <person name="Terry A."/>
            <person name="Prabhakar S."/>
            <person name="She X."/>
            <person name="Xie G."/>
            <person name="Hellsten U."/>
            <person name="Chan Y.M."/>
            <person name="Altherr M."/>
            <person name="Couronne O."/>
            <person name="Aerts A."/>
            <person name="Bajorek E."/>
            <person name="Black S."/>
            <person name="Blumer H."/>
            <person name="Branscomb E."/>
            <person name="Brown N.C."/>
            <person name="Bruno W.J."/>
            <person name="Buckingham J.M."/>
            <person name="Callen D.F."/>
            <person name="Campbell C.S."/>
            <person name="Campbell M.L."/>
            <person name="Campbell E.W."/>
            <person name="Caoile C."/>
            <person name="Challacombe J.F."/>
            <person name="Chasteen L.A."/>
            <person name="Chertkov O."/>
            <person name="Chi H.C."/>
            <person name="Christensen M."/>
            <person name="Clark L.M."/>
            <person name="Cohn J.D."/>
            <person name="Denys M."/>
            <person name="Detter J.C."/>
            <person name="Dickson M."/>
            <person name="Dimitrijevic-Bussod M."/>
            <person name="Escobar J."/>
            <person name="Fawcett J.J."/>
            <person name="Flowers D."/>
            <person name="Fotopulos D."/>
            <person name="Glavina T."/>
            <person name="Gomez M."/>
            <person name="Gonzales E."/>
            <person name="Goodstein D."/>
            <person name="Goodwin L.A."/>
            <person name="Grady D.L."/>
            <person name="Grigoriev I."/>
            <person name="Groza M."/>
            <person name="Hammon N."/>
            <person name="Hawkins T."/>
            <person name="Haydu L."/>
            <person name="Hildebrand C.E."/>
            <person name="Huang W."/>
            <person name="Israni S."/>
            <person name="Jett J."/>
            <person name="Jewett P.B."/>
            <person name="Kadner K."/>
            <person name="Kimball H."/>
            <person name="Kobayashi A."/>
            <person name="Krawczyk M.-C."/>
            <person name="Leyba T."/>
            <person name="Longmire J.L."/>
            <person name="Lopez F."/>
            <person name="Lou Y."/>
            <person name="Lowry S."/>
            <person name="Ludeman T."/>
            <person name="Manohar C.F."/>
            <person name="Mark G.A."/>
            <person name="McMurray K.L."/>
            <person name="Meincke L.J."/>
            <person name="Morgan J."/>
            <person name="Moyzis R.K."/>
            <person name="Mundt M.O."/>
            <person name="Munk A.C."/>
            <person name="Nandkeshwar R.D."/>
            <person name="Pitluck S."/>
            <person name="Pollard M."/>
            <person name="Predki P."/>
            <person name="Parson-Quintana B."/>
            <person name="Ramirez L."/>
            <person name="Rash S."/>
            <person name="Retterer J."/>
            <person name="Ricke D.O."/>
            <person name="Robinson D.L."/>
            <person name="Rodriguez A."/>
            <person name="Salamov A."/>
            <person name="Saunders E.H."/>
            <person name="Scott D."/>
            <person name="Shough T."/>
            <person name="Stallings R.L."/>
            <person name="Stalvey M."/>
            <person name="Sutherland R.D."/>
            <person name="Tapia R."/>
            <person name="Tesmer J.G."/>
            <person name="Thayer N."/>
            <person name="Thompson L.S."/>
            <person name="Tice H."/>
            <person name="Torney D.C."/>
            <person name="Tran-Gyamfi M."/>
            <person name="Tsai M."/>
            <person name="Ulanovsky L.E."/>
            <person name="Ustaszewska A."/>
            <person name="Vo N."/>
            <person name="White P.S."/>
            <person name="Williams A.L."/>
            <person name="Wills P.L."/>
            <person name="Wu J.-R."/>
            <person name="Wu K."/>
            <person name="Yang J."/>
            <person name="DeJong P."/>
            <person name="Bruce D."/>
            <person name="Doggett N.A."/>
            <person name="Deaven L."/>
            <person name="Schmutz J."/>
            <person name="Grimwood J."/>
            <person name="Richardson P."/>
            <person name="Rokhsar D.S."/>
            <person name="Eichler E.E."/>
            <person name="Gilna P."/>
            <person name="Lucas S.M."/>
            <person name="Myers R.M."/>
            <person name="Rubin E.M."/>
            <person name="Pennacchio L.A."/>
        </authorList>
    </citation>
    <scope>NUCLEOTIDE SEQUENCE [LARGE SCALE GENOMIC DNA]</scope>
</reference>
<reference key="3">
    <citation type="journal article" date="2004" name="Genome Res.">
        <title>The status, quality, and expansion of the NIH full-length cDNA project: the Mammalian Gene Collection (MGC).</title>
        <authorList>
            <consortium name="The MGC Project Team"/>
        </authorList>
    </citation>
    <scope>NUCLEOTIDE SEQUENCE [LARGE SCALE MRNA]</scope>
    <source>
        <tissue>Eye</tissue>
    </source>
</reference>
<proteinExistence type="evidence at protein level"/>
<accession>P0CG21</accession>
<accession>B8ZZ27</accession>
<accession>Q8N233</accession>
<accession>Q96AX3</accession>
<accession>Q96S23</accession>
<dbReference type="EMBL" id="AK093527">
    <property type="protein sequence ID" value="BAC04193.1"/>
    <property type="molecule type" value="mRNA"/>
</dbReference>
<dbReference type="EMBL" id="Z98883">
    <property type="status" value="NOT_ANNOTATED_CDS"/>
    <property type="molecule type" value="Genomic_DNA"/>
</dbReference>
<dbReference type="EMBL" id="BC113527">
    <property type="protein sequence ID" value="AAI13528.1"/>
    <property type="molecule type" value="mRNA"/>
</dbReference>
<dbReference type="EMBL" id="BC113529">
    <property type="protein sequence ID" value="AAI13530.1"/>
    <property type="molecule type" value="mRNA"/>
</dbReference>
<dbReference type="CCDS" id="CCDS45366.1"/>
<dbReference type="RefSeq" id="NP_001288088.1">
    <property type="nucleotide sequence ID" value="NM_001301159.2"/>
</dbReference>
<dbReference type="RefSeq" id="NP_788850.1">
    <property type="nucleotide sequence ID" value="NM_176677.3"/>
</dbReference>
<dbReference type="SMR" id="P0CG21"/>
<dbReference type="BioGRID" id="129711">
    <property type="interactions" value="20"/>
</dbReference>
<dbReference type="FunCoup" id="P0CG21">
    <property type="interactions" value="12"/>
</dbReference>
<dbReference type="IntAct" id="P0CG21">
    <property type="interactions" value="19"/>
</dbReference>
<dbReference type="STRING" id="9606.ENSP00000410858"/>
<dbReference type="BioMuta" id="NHLRC4"/>
<dbReference type="MassIVE" id="P0CG21"/>
<dbReference type="PaxDb" id="9606-ENSP00000410858"/>
<dbReference type="PeptideAtlas" id="P0CG21"/>
<dbReference type="Antibodypedia" id="82190">
    <property type="antibodies" value="2 antibodies from 2 providers"/>
</dbReference>
<dbReference type="DNASU" id="283948"/>
<dbReference type="Ensembl" id="ENST00000424439.3">
    <property type="protein sequence ID" value="ENSP00000410858.2"/>
    <property type="gene ID" value="ENSG00000257108.2"/>
</dbReference>
<dbReference type="Ensembl" id="ENST00000540585.1">
    <property type="protein sequence ID" value="ENSP00000442223.1"/>
    <property type="gene ID" value="ENSG00000257108.2"/>
</dbReference>
<dbReference type="GeneID" id="283948"/>
<dbReference type="KEGG" id="hsa:283948"/>
<dbReference type="MANE-Select" id="ENST00000424439.3">
    <property type="protein sequence ID" value="ENSP00000410858.2"/>
    <property type="RefSeq nucleotide sequence ID" value="NM_001301159.2"/>
    <property type="RefSeq protein sequence ID" value="NP_001288088.1"/>
</dbReference>
<dbReference type="UCSC" id="uc002chl.4">
    <property type="organism name" value="human"/>
</dbReference>
<dbReference type="AGR" id="HGNC:26700"/>
<dbReference type="CTD" id="283948"/>
<dbReference type="GeneCards" id="NHLRC4"/>
<dbReference type="HGNC" id="HGNC:26700">
    <property type="gene designation" value="NHLRC4"/>
</dbReference>
<dbReference type="HPA" id="ENSG00000257108">
    <property type="expression patterns" value="Tissue enhanced (fallopian tube, kidney)"/>
</dbReference>
<dbReference type="neXtProt" id="NX_P0CG21"/>
<dbReference type="PharmGKB" id="PA165450302"/>
<dbReference type="VEuPathDB" id="HostDB:ENSG00000257108"/>
<dbReference type="eggNOG" id="KOG2177">
    <property type="taxonomic scope" value="Eukaryota"/>
</dbReference>
<dbReference type="GeneTree" id="ENSGT00530000063870"/>
<dbReference type="HOGENOM" id="CLU_2014466_0_0_1"/>
<dbReference type="InParanoid" id="P0CG21"/>
<dbReference type="OMA" id="HGAPICL"/>
<dbReference type="OrthoDB" id="10020332at2759"/>
<dbReference type="PAN-GO" id="P0CG21">
    <property type="GO annotations" value="2 GO annotations based on evolutionary models"/>
</dbReference>
<dbReference type="PhylomeDB" id="P0CG21"/>
<dbReference type="PathwayCommons" id="P0CG21"/>
<dbReference type="SignaLink" id="P0CG21"/>
<dbReference type="BioGRID-ORCS" id="283948">
    <property type="hits" value="16 hits in 1152 CRISPR screens"/>
</dbReference>
<dbReference type="GenomeRNAi" id="283948"/>
<dbReference type="Pharos" id="P0CG21">
    <property type="development level" value="Tdark"/>
</dbReference>
<dbReference type="PRO" id="PR:P0CG21"/>
<dbReference type="Proteomes" id="UP000005640">
    <property type="component" value="Chromosome 16"/>
</dbReference>
<dbReference type="RNAct" id="P0CG21">
    <property type="molecule type" value="protein"/>
</dbReference>
<dbReference type="Bgee" id="ENSG00000257108">
    <property type="expression patterns" value="Expressed in right uterine tube and 117 other cell types or tissues"/>
</dbReference>
<dbReference type="Gene3D" id="2.120.10.30">
    <property type="entry name" value="TolB, C-terminal domain"/>
    <property type="match status" value="1"/>
</dbReference>
<dbReference type="InterPro" id="IPR011042">
    <property type="entry name" value="6-blade_b-propeller_TolB-like"/>
</dbReference>
<dbReference type="InterPro" id="IPR001258">
    <property type="entry name" value="NHL_repeat"/>
</dbReference>
<dbReference type="PANTHER" id="PTHR25464:SF3">
    <property type="entry name" value="E3 UBIQUITIN-PROTEIN LIGASE TRIM32"/>
    <property type="match status" value="1"/>
</dbReference>
<dbReference type="PANTHER" id="PTHR25464">
    <property type="entry name" value="TRIPARTITE MOTIF-CONTAINING PROTEIN 2-LIKE PROTEIN"/>
    <property type="match status" value="1"/>
</dbReference>
<dbReference type="Pfam" id="PF01436">
    <property type="entry name" value="NHL"/>
    <property type="match status" value="2"/>
</dbReference>
<dbReference type="SUPFAM" id="SSF101898">
    <property type="entry name" value="NHL repeat"/>
    <property type="match status" value="1"/>
</dbReference>
<dbReference type="PROSITE" id="PS51125">
    <property type="entry name" value="NHL"/>
    <property type="match status" value="2"/>
</dbReference>
<keyword id="KW-1267">Proteomics identification</keyword>
<keyword id="KW-1185">Reference proteome</keyword>
<keyword id="KW-0677">Repeat</keyword>